<accession>P05608</accession>
<protein>
    <recommendedName>
        <fullName>Ovomucoid</fullName>
    </recommendedName>
</protein>
<keyword id="KW-0903">Direct protein sequencing</keyword>
<keyword id="KW-1015">Disulfide bond</keyword>
<keyword id="KW-0325">Glycoprotein</keyword>
<keyword id="KW-0646">Protease inhibitor</keyword>
<keyword id="KW-0677">Repeat</keyword>
<keyword id="KW-0964">Secreted</keyword>
<keyword id="KW-0722">Serine protease inhibitor</keyword>
<organism>
    <name type="scientific">Argusianus argus</name>
    <name type="common">Great argus</name>
    <name type="synonym">Phasianus argus</name>
    <dbReference type="NCBI Taxonomy" id="9081"/>
    <lineage>
        <taxon>Eukaryota</taxon>
        <taxon>Metazoa</taxon>
        <taxon>Chordata</taxon>
        <taxon>Craniata</taxon>
        <taxon>Vertebrata</taxon>
        <taxon>Euteleostomi</taxon>
        <taxon>Archelosauria</taxon>
        <taxon>Archosauria</taxon>
        <taxon>Dinosauria</taxon>
        <taxon>Saurischia</taxon>
        <taxon>Theropoda</taxon>
        <taxon>Coelurosauria</taxon>
        <taxon>Aves</taxon>
        <taxon>Neognathae</taxon>
        <taxon>Galloanserae</taxon>
        <taxon>Galliformes</taxon>
        <taxon>Phasianidae</taxon>
        <taxon>Phasianinae</taxon>
        <taxon>Argusianus</taxon>
    </lineage>
</organism>
<evidence type="ECO:0000255" key="1">
    <source>
        <dbReference type="PROSITE-ProRule" id="PRU00798"/>
    </source>
</evidence>
<evidence type="ECO:0000269" key="2">
    <source>
    </source>
</evidence>
<comment type="subcellular location">
    <subcellularLocation>
        <location>Secreted</location>
    </subcellularLocation>
</comment>
<comment type="domain">
    <text>Avian ovomucoid consists of three homologous, tandem Kazal family inhibitory domains.</text>
</comment>
<proteinExistence type="evidence at protein level"/>
<feature type="chain" id="PRO_0000073064" description="Ovomucoid">
    <location>
        <begin position="1" status="less than"/>
        <end position="54" status="greater than"/>
    </location>
</feature>
<feature type="domain" description="Kazal-like" evidence="1">
    <location>
        <begin position="4"/>
        <end position="54"/>
    </location>
</feature>
<feature type="site" description="Reactive bond 3">
    <location>
        <begin position="16"/>
        <end position="17"/>
    </location>
</feature>
<feature type="glycosylation site" description="N-linked (GlcNAc...) asparagine" evidence="2">
    <location>
        <position position="43"/>
    </location>
</feature>
<feature type="disulfide bond">
    <location>
        <begin position="6"/>
        <end position="36"/>
    </location>
</feature>
<feature type="disulfide bond">
    <location>
        <begin position="14"/>
        <end position="33"/>
    </location>
</feature>
<feature type="disulfide bond">
    <location>
        <begin position="22"/>
        <end position="54"/>
    </location>
</feature>
<feature type="non-terminal residue">
    <location>
        <position position="1"/>
    </location>
</feature>
<feature type="non-terminal residue">
    <location>
        <position position="54"/>
    </location>
</feature>
<name>IOVO_ARGAR</name>
<dbReference type="PIR" id="C31443">
    <property type="entry name" value="C31443"/>
</dbReference>
<dbReference type="SMR" id="P05608"/>
<dbReference type="iPTMnet" id="P05608"/>
<dbReference type="GO" id="GO:0005615">
    <property type="term" value="C:extracellular space"/>
    <property type="evidence" value="ECO:0007669"/>
    <property type="project" value="UniProtKB-ARBA"/>
</dbReference>
<dbReference type="GO" id="GO:0004867">
    <property type="term" value="F:serine-type endopeptidase inhibitor activity"/>
    <property type="evidence" value="ECO:0007669"/>
    <property type="project" value="UniProtKB-KW"/>
</dbReference>
<dbReference type="CDD" id="cd00104">
    <property type="entry name" value="KAZAL_FS"/>
    <property type="match status" value="1"/>
</dbReference>
<dbReference type="FunFam" id="3.30.60.30:FF:000037">
    <property type="entry name" value="Ovomucoid"/>
    <property type="match status" value="1"/>
</dbReference>
<dbReference type="Gene3D" id="3.30.60.30">
    <property type="match status" value="1"/>
</dbReference>
<dbReference type="InterPro" id="IPR051597">
    <property type="entry name" value="Bifunctional_prot_inhibitor"/>
</dbReference>
<dbReference type="InterPro" id="IPR002350">
    <property type="entry name" value="Kazal_dom"/>
</dbReference>
<dbReference type="InterPro" id="IPR036058">
    <property type="entry name" value="Kazal_dom_sf"/>
</dbReference>
<dbReference type="PANTHER" id="PTHR47729:SF1">
    <property type="entry name" value="OVOMUCOID-LIKE-RELATED"/>
    <property type="match status" value="1"/>
</dbReference>
<dbReference type="PANTHER" id="PTHR47729">
    <property type="entry name" value="SERINE PEPTIDASE INHIBITOR, KAZAL TYPE 2, TANDEM DUPLICATE 1-RELATED"/>
    <property type="match status" value="1"/>
</dbReference>
<dbReference type="Pfam" id="PF00050">
    <property type="entry name" value="Kazal_1"/>
    <property type="match status" value="1"/>
</dbReference>
<dbReference type="SMART" id="SM00280">
    <property type="entry name" value="KAZAL"/>
    <property type="match status" value="1"/>
</dbReference>
<dbReference type="SUPFAM" id="SSF100895">
    <property type="entry name" value="Kazal-type serine protease inhibitors"/>
    <property type="match status" value="1"/>
</dbReference>
<dbReference type="PROSITE" id="PS00282">
    <property type="entry name" value="KAZAL_1"/>
    <property type="match status" value="1"/>
</dbReference>
<dbReference type="PROSITE" id="PS51465">
    <property type="entry name" value="KAZAL_2"/>
    <property type="match status" value="1"/>
</dbReference>
<sequence length="54" mass="5818">LAAVDCSEHPKPACTLEDRPLCGSDNKIYSNKCDFCNAVLESNGTLTLSHFGKC</sequence>
<reference key="1">
    <citation type="journal article" date="1987" name="Biochemistry">
        <title>Ovomucoid third domains from 100 avian species: isolation, sequences, and hypervariability of enzyme-inhibitor contact residues.</title>
        <authorList>
            <person name="Laskowski M. Jr."/>
            <person name="Kato I."/>
            <person name="Ardelt W."/>
            <person name="Cook J."/>
            <person name="Denton A."/>
            <person name="Empie M.W."/>
            <person name="Kohr W.J."/>
            <person name="Park S.J."/>
            <person name="Parks K."/>
            <person name="Schatzley B.L."/>
            <person name="Schoenberger O.L."/>
            <person name="Tashiro M."/>
            <person name="Vichot G."/>
            <person name="Whatley H.E."/>
            <person name="Wieczorek A."/>
            <person name="Wieczorek M."/>
        </authorList>
    </citation>
    <scope>PROTEIN SEQUENCE</scope>
</reference>